<organism>
    <name type="scientific">Cereibacter sphaeroides (strain ATCC 17023 / DSM 158 / JCM 6121 / CCUG 31486 / LMG 2827 / NBRC 12203 / NCIMB 8253 / ATH 2.4.1.)</name>
    <name type="common">Rhodobacter sphaeroides</name>
    <dbReference type="NCBI Taxonomy" id="272943"/>
    <lineage>
        <taxon>Bacteria</taxon>
        <taxon>Pseudomonadati</taxon>
        <taxon>Pseudomonadota</taxon>
        <taxon>Alphaproteobacteria</taxon>
        <taxon>Rhodobacterales</taxon>
        <taxon>Paracoccaceae</taxon>
        <taxon>Cereibacter</taxon>
    </lineage>
</organism>
<comment type="function">
    <text evidence="1">Catalyzes the condensation of pantoate with beta-alanine in an ATP-dependent reaction via a pantoyl-adenylate intermediate.</text>
</comment>
<comment type="catalytic activity">
    <reaction evidence="1">
        <text>(R)-pantoate + beta-alanine + ATP = (R)-pantothenate + AMP + diphosphate + H(+)</text>
        <dbReference type="Rhea" id="RHEA:10912"/>
        <dbReference type="ChEBI" id="CHEBI:15378"/>
        <dbReference type="ChEBI" id="CHEBI:15980"/>
        <dbReference type="ChEBI" id="CHEBI:29032"/>
        <dbReference type="ChEBI" id="CHEBI:30616"/>
        <dbReference type="ChEBI" id="CHEBI:33019"/>
        <dbReference type="ChEBI" id="CHEBI:57966"/>
        <dbReference type="ChEBI" id="CHEBI:456215"/>
        <dbReference type="EC" id="6.3.2.1"/>
    </reaction>
</comment>
<comment type="pathway">
    <text evidence="1">Cofactor biosynthesis; (R)-pantothenate biosynthesis; (R)-pantothenate from (R)-pantoate and beta-alanine: step 1/1.</text>
</comment>
<comment type="subunit">
    <text evidence="1">Homodimer.</text>
</comment>
<comment type="subcellular location">
    <subcellularLocation>
        <location evidence="1">Cytoplasm</location>
    </subcellularLocation>
</comment>
<comment type="miscellaneous">
    <text evidence="1">The reaction proceeds by a bi uni uni bi ping pong mechanism.</text>
</comment>
<comment type="similarity">
    <text evidence="1">Belongs to the pantothenate synthetase family.</text>
</comment>
<proteinExistence type="inferred from homology"/>
<accession>Q3J5N0</accession>
<feature type="chain" id="PRO_0000305527" description="Pantothenate synthetase">
    <location>
        <begin position="1"/>
        <end position="279"/>
    </location>
</feature>
<feature type="active site" description="Proton donor" evidence="1">
    <location>
        <position position="38"/>
    </location>
</feature>
<feature type="binding site" evidence="1">
    <location>
        <begin position="31"/>
        <end position="38"/>
    </location>
    <ligand>
        <name>ATP</name>
        <dbReference type="ChEBI" id="CHEBI:30616"/>
    </ligand>
</feature>
<feature type="binding site" evidence="1">
    <location>
        <position position="62"/>
    </location>
    <ligand>
        <name>(R)-pantoate</name>
        <dbReference type="ChEBI" id="CHEBI:15980"/>
    </ligand>
</feature>
<feature type="binding site" evidence="1">
    <location>
        <position position="62"/>
    </location>
    <ligand>
        <name>beta-alanine</name>
        <dbReference type="ChEBI" id="CHEBI:57966"/>
    </ligand>
</feature>
<feature type="binding site" evidence="1">
    <location>
        <begin position="148"/>
        <end position="151"/>
    </location>
    <ligand>
        <name>ATP</name>
        <dbReference type="ChEBI" id="CHEBI:30616"/>
    </ligand>
</feature>
<feature type="binding site" evidence="1">
    <location>
        <position position="154"/>
    </location>
    <ligand>
        <name>(R)-pantoate</name>
        <dbReference type="ChEBI" id="CHEBI:15980"/>
    </ligand>
</feature>
<feature type="binding site" evidence="1">
    <location>
        <position position="177"/>
    </location>
    <ligand>
        <name>ATP</name>
        <dbReference type="ChEBI" id="CHEBI:30616"/>
    </ligand>
</feature>
<feature type="binding site" evidence="1">
    <location>
        <begin position="185"/>
        <end position="188"/>
    </location>
    <ligand>
        <name>ATP</name>
        <dbReference type="ChEBI" id="CHEBI:30616"/>
    </ligand>
</feature>
<keyword id="KW-0067">ATP-binding</keyword>
<keyword id="KW-0963">Cytoplasm</keyword>
<keyword id="KW-0436">Ligase</keyword>
<keyword id="KW-0547">Nucleotide-binding</keyword>
<keyword id="KW-0566">Pantothenate biosynthesis</keyword>
<keyword id="KW-1185">Reference proteome</keyword>
<sequence length="279" mass="29877">MPPVLRTVAELRARVSDWKAAGETVGVVPTMGALHEGHLSLARRARAACDRVIVTIFVNPRQFNNPADLEKYPRTEAQDAALLASVGVDAVFAPGPEEVYPRGFATNVSVSGVSEPLEGAHRPGHFDGVATVVAKLFGMTRADRAFFGEKDWQQLMVVQRLVADLNIPVTIEGCATVREADGLALSSRNRRLSVEGRARAPALVRAMQAAAEAMRGGRAIPEALAEARAAVLAAGFETVDYLELRTADLLLPMERLQGEGRLLAAATLDGVRLIDNIPV</sequence>
<reference key="1">
    <citation type="submission" date="2005-09" db="EMBL/GenBank/DDBJ databases">
        <title>Complete sequence of chromosome 1 of Rhodobacter sphaeroides 2.4.1.</title>
        <authorList>
            <person name="Copeland A."/>
            <person name="Lucas S."/>
            <person name="Lapidus A."/>
            <person name="Barry K."/>
            <person name="Detter J.C."/>
            <person name="Glavina T."/>
            <person name="Hammon N."/>
            <person name="Israni S."/>
            <person name="Pitluck S."/>
            <person name="Richardson P."/>
            <person name="Mackenzie C."/>
            <person name="Choudhary M."/>
            <person name="Larimer F."/>
            <person name="Hauser L.J."/>
            <person name="Land M."/>
            <person name="Donohue T.J."/>
            <person name="Kaplan S."/>
        </authorList>
    </citation>
    <scope>NUCLEOTIDE SEQUENCE [LARGE SCALE GENOMIC DNA]</scope>
    <source>
        <strain>ATCC 17023 / DSM 158 / JCM 6121 / CCUG 31486 / LMG 2827 / NBRC 12203 / NCIMB 8253 / ATH 2.4.1.</strain>
    </source>
</reference>
<evidence type="ECO:0000255" key="1">
    <source>
        <dbReference type="HAMAP-Rule" id="MF_00158"/>
    </source>
</evidence>
<gene>
    <name evidence="1" type="primary">panC</name>
    <name type="ordered locus">RHOS4_03360</name>
    <name type="ORF">RSP_1757</name>
</gene>
<name>PANC_CERS4</name>
<protein>
    <recommendedName>
        <fullName evidence="1">Pantothenate synthetase</fullName>
        <shortName evidence="1">PS</shortName>
        <ecNumber evidence="1">6.3.2.1</ecNumber>
    </recommendedName>
    <alternativeName>
        <fullName evidence="1">Pantoate--beta-alanine ligase</fullName>
    </alternativeName>
    <alternativeName>
        <fullName evidence="1">Pantoate-activating enzyme</fullName>
    </alternativeName>
</protein>
<dbReference type="EC" id="6.3.2.1" evidence="1"/>
<dbReference type="EMBL" id="CP000143">
    <property type="protein sequence ID" value="ABA77904.1"/>
    <property type="molecule type" value="Genomic_DNA"/>
</dbReference>
<dbReference type="RefSeq" id="WP_011336964.1">
    <property type="nucleotide sequence ID" value="NC_007493.2"/>
</dbReference>
<dbReference type="RefSeq" id="YP_351805.1">
    <property type="nucleotide sequence ID" value="NC_007493.2"/>
</dbReference>
<dbReference type="SMR" id="Q3J5N0"/>
<dbReference type="STRING" id="272943.RSP_1757"/>
<dbReference type="EnsemblBacteria" id="ABA77904">
    <property type="protein sequence ID" value="ABA77904"/>
    <property type="gene ID" value="RSP_1757"/>
</dbReference>
<dbReference type="GeneID" id="3718963"/>
<dbReference type="KEGG" id="rsp:RSP_1757"/>
<dbReference type="PATRIC" id="fig|272943.9.peg.635"/>
<dbReference type="eggNOG" id="COG0414">
    <property type="taxonomic scope" value="Bacteria"/>
</dbReference>
<dbReference type="OrthoDB" id="9773087at2"/>
<dbReference type="PhylomeDB" id="Q3J5N0"/>
<dbReference type="UniPathway" id="UPA00028">
    <property type="reaction ID" value="UER00005"/>
</dbReference>
<dbReference type="Proteomes" id="UP000002703">
    <property type="component" value="Chromosome 1"/>
</dbReference>
<dbReference type="GO" id="GO:0005829">
    <property type="term" value="C:cytosol"/>
    <property type="evidence" value="ECO:0007669"/>
    <property type="project" value="TreeGrafter"/>
</dbReference>
<dbReference type="GO" id="GO:0005524">
    <property type="term" value="F:ATP binding"/>
    <property type="evidence" value="ECO:0007669"/>
    <property type="project" value="UniProtKB-KW"/>
</dbReference>
<dbReference type="GO" id="GO:0004592">
    <property type="term" value="F:pantoate-beta-alanine ligase activity"/>
    <property type="evidence" value="ECO:0007669"/>
    <property type="project" value="UniProtKB-UniRule"/>
</dbReference>
<dbReference type="GO" id="GO:0015940">
    <property type="term" value="P:pantothenate biosynthetic process"/>
    <property type="evidence" value="ECO:0007669"/>
    <property type="project" value="UniProtKB-UniRule"/>
</dbReference>
<dbReference type="CDD" id="cd00560">
    <property type="entry name" value="PanC"/>
    <property type="match status" value="1"/>
</dbReference>
<dbReference type="FunFam" id="3.40.50.620:FF:000114">
    <property type="entry name" value="Pantothenate synthetase"/>
    <property type="match status" value="1"/>
</dbReference>
<dbReference type="Gene3D" id="3.40.50.620">
    <property type="entry name" value="HUPs"/>
    <property type="match status" value="1"/>
</dbReference>
<dbReference type="Gene3D" id="3.30.1300.10">
    <property type="entry name" value="Pantoate-beta-alanine ligase, C-terminal domain"/>
    <property type="match status" value="1"/>
</dbReference>
<dbReference type="HAMAP" id="MF_00158">
    <property type="entry name" value="PanC"/>
    <property type="match status" value="1"/>
</dbReference>
<dbReference type="InterPro" id="IPR004821">
    <property type="entry name" value="Cyt_trans-like"/>
</dbReference>
<dbReference type="InterPro" id="IPR003721">
    <property type="entry name" value="Pantoate_ligase"/>
</dbReference>
<dbReference type="InterPro" id="IPR042176">
    <property type="entry name" value="Pantoate_ligase_C"/>
</dbReference>
<dbReference type="InterPro" id="IPR014729">
    <property type="entry name" value="Rossmann-like_a/b/a_fold"/>
</dbReference>
<dbReference type="NCBIfam" id="TIGR00125">
    <property type="entry name" value="cyt_tran_rel"/>
    <property type="match status" value="1"/>
</dbReference>
<dbReference type="NCBIfam" id="TIGR00018">
    <property type="entry name" value="panC"/>
    <property type="match status" value="1"/>
</dbReference>
<dbReference type="PANTHER" id="PTHR21299">
    <property type="entry name" value="CYTIDYLATE KINASE/PANTOATE-BETA-ALANINE LIGASE"/>
    <property type="match status" value="1"/>
</dbReference>
<dbReference type="PANTHER" id="PTHR21299:SF1">
    <property type="entry name" value="PANTOATE--BETA-ALANINE LIGASE"/>
    <property type="match status" value="1"/>
</dbReference>
<dbReference type="Pfam" id="PF02569">
    <property type="entry name" value="Pantoate_ligase"/>
    <property type="match status" value="1"/>
</dbReference>
<dbReference type="SUPFAM" id="SSF52374">
    <property type="entry name" value="Nucleotidylyl transferase"/>
    <property type="match status" value="1"/>
</dbReference>